<reference key="1">
    <citation type="journal article" date="2005" name="J. Bacteriol.">
        <title>Insights on evolution of virulence and resistance from the complete genome analysis of an early methicillin-resistant Staphylococcus aureus strain and a biofilm-producing methicillin-resistant Staphylococcus epidermidis strain.</title>
        <authorList>
            <person name="Gill S.R."/>
            <person name="Fouts D.E."/>
            <person name="Archer G.L."/>
            <person name="Mongodin E.F."/>
            <person name="DeBoy R.T."/>
            <person name="Ravel J."/>
            <person name="Paulsen I.T."/>
            <person name="Kolonay J.F."/>
            <person name="Brinkac L.M."/>
            <person name="Beanan M.J."/>
            <person name="Dodson R.J."/>
            <person name="Daugherty S.C."/>
            <person name="Madupu R."/>
            <person name="Angiuoli S.V."/>
            <person name="Durkin A.S."/>
            <person name="Haft D.H."/>
            <person name="Vamathevan J.J."/>
            <person name="Khouri H."/>
            <person name="Utterback T.R."/>
            <person name="Lee C."/>
            <person name="Dimitrov G."/>
            <person name="Jiang L."/>
            <person name="Qin H."/>
            <person name="Weidman J."/>
            <person name="Tran K."/>
            <person name="Kang K.H."/>
            <person name="Hance I.R."/>
            <person name="Nelson K.E."/>
            <person name="Fraser C.M."/>
        </authorList>
    </citation>
    <scope>NUCLEOTIDE SEQUENCE [LARGE SCALE GENOMIC DNA]</scope>
    <source>
        <strain>ATCC 35984 / DSM 28319 / BCRC 17069 / CCUG 31568 / BM 3577 / RP62A</strain>
    </source>
</reference>
<sequence>MTTPFKRIHLIVMDSVGIGEGPDAAAFNDEGSHTLKHTLEGFKQKLPHLEQLGLGNIAPLPVVSKVTHPGAFYTKLSEASVGKDTMTGHWEIMGLNIMQPFKVYPNGFPEELVKEIESMTGRKVVANRPASGTQIIDEWGEHQMKTGDLIVYTSADPVLQIAAHEDVIPLEELYEICEKVRELTKDPKYLIGRIIARPYVGEPGNFTRTSNRHDYALKPFGRTVMNSLKDNGYDVIAIGKINDIYDGEGVTEAIRTKNNMDGMDQLIEVVKKDFEGISFLNLVDFDALYGHRRDKEGYAQAIKDFDLRLPELMNHLREDDLVIITADHGNDPIAKGTDHTREYIPLLMFSPKIKDYHELSQDTTFSSIGVTIADNFNVELPKYGKSYLKEMGVEHQ</sequence>
<feature type="chain" id="PRO_0000199846" description="Phosphopentomutase">
    <location>
        <begin position="1"/>
        <end position="396"/>
    </location>
</feature>
<feature type="binding site" evidence="1">
    <location>
        <position position="14"/>
    </location>
    <ligand>
        <name>Mn(2+)</name>
        <dbReference type="ChEBI" id="CHEBI:29035"/>
        <label>1</label>
    </ligand>
</feature>
<feature type="binding site" evidence="1">
    <location>
        <position position="286"/>
    </location>
    <ligand>
        <name>Mn(2+)</name>
        <dbReference type="ChEBI" id="CHEBI:29035"/>
        <label>2</label>
    </ligand>
</feature>
<feature type="binding site" evidence="1">
    <location>
        <position position="291"/>
    </location>
    <ligand>
        <name>Mn(2+)</name>
        <dbReference type="ChEBI" id="CHEBI:29035"/>
        <label>2</label>
    </ligand>
</feature>
<feature type="binding site" evidence="1">
    <location>
        <position position="327"/>
    </location>
    <ligand>
        <name>Mn(2+)</name>
        <dbReference type="ChEBI" id="CHEBI:29035"/>
        <label>1</label>
    </ligand>
</feature>
<feature type="binding site" evidence="1">
    <location>
        <position position="328"/>
    </location>
    <ligand>
        <name>Mn(2+)</name>
        <dbReference type="ChEBI" id="CHEBI:29035"/>
        <label>1</label>
    </ligand>
</feature>
<feature type="binding site" evidence="1">
    <location>
        <position position="339"/>
    </location>
    <ligand>
        <name>Mn(2+)</name>
        <dbReference type="ChEBI" id="CHEBI:29035"/>
        <label>2</label>
    </ligand>
</feature>
<evidence type="ECO:0000255" key="1">
    <source>
        <dbReference type="HAMAP-Rule" id="MF_00740"/>
    </source>
</evidence>
<gene>
    <name evidence="1" type="primary">deoB</name>
    <name type="synonym">drm</name>
    <name type="ordered locus">SERP1743</name>
</gene>
<accession>Q5HM86</accession>
<name>DEOB_STAEQ</name>
<keyword id="KW-0963">Cytoplasm</keyword>
<keyword id="KW-0413">Isomerase</keyword>
<keyword id="KW-0464">Manganese</keyword>
<keyword id="KW-0479">Metal-binding</keyword>
<keyword id="KW-1185">Reference proteome</keyword>
<protein>
    <recommendedName>
        <fullName evidence="1">Phosphopentomutase</fullName>
        <ecNumber evidence="1">5.4.2.7</ecNumber>
    </recommendedName>
    <alternativeName>
        <fullName evidence="1">Phosphodeoxyribomutase</fullName>
    </alternativeName>
</protein>
<organism>
    <name type="scientific">Staphylococcus epidermidis (strain ATCC 35984 / DSM 28319 / BCRC 17069 / CCUG 31568 / BM 3577 / RP62A)</name>
    <dbReference type="NCBI Taxonomy" id="176279"/>
    <lineage>
        <taxon>Bacteria</taxon>
        <taxon>Bacillati</taxon>
        <taxon>Bacillota</taxon>
        <taxon>Bacilli</taxon>
        <taxon>Bacillales</taxon>
        <taxon>Staphylococcaceae</taxon>
        <taxon>Staphylococcus</taxon>
    </lineage>
</organism>
<dbReference type="EC" id="5.4.2.7" evidence="1"/>
<dbReference type="EMBL" id="CP000029">
    <property type="protein sequence ID" value="AAW55073.1"/>
    <property type="molecule type" value="Genomic_DNA"/>
</dbReference>
<dbReference type="RefSeq" id="WP_002495578.1">
    <property type="nucleotide sequence ID" value="NC_002976.3"/>
</dbReference>
<dbReference type="SMR" id="Q5HM86"/>
<dbReference type="STRING" id="176279.SERP1743"/>
<dbReference type="KEGG" id="ser:SERP1743"/>
<dbReference type="eggNOG" id="COG1015">
    <property type="taxonomic scope" value="Bacteria"/>
</dbReference>
<dbReference type="HOGENOM" id="CLU_053861_0_0_9"/>
<dbReference type="UniPathway" id="UPA00002">
    <property type="reaction ID" value="UER00467"/>
</dbReference>
<dbReference type="Proteomes" id="UP000000531">
    <property type="component" value="Chromosome"/>
</dbReference>
<dbReference type="GO" id="GO:0005829">
    <property type="term" value="C:cytosol"/>
    <property type="evidence" value="ECO:0007669"/>
    <property type="project" value="TreeGrafter"/>
</dbReference>
<dbReference type="GO" id="GO:0000287">
    <property type="term" value="F:magnesium ion binding"/>
    <property type="evidence" value="ECO:0007669"/>
    <property type="project" value="InterPro"/>
</dbReference>
<dbReference type="GO" id="GO:0030145">
    <property type="term" value="F:manganese ion binding"/>
    <property type="evidence" value="ECO:0007669"/>
    <property type="project" value="UniProtKB-UniRule"/>
</dbReference>
<dbReference type="GO" id="GO:0008973">
    <property type="term" value="F:phosphopentomutase activity"/>
    <property type="evidence" value="ECO:0007669"/>
    <property type="project" value="UniProtKB-UniRule"/>
</dbReference>
<dbReference type="GO" id="GO:0006018">
    <property type="term" value="P:2-deoxyribose 1-phosphate catabolic process"/>
    <property type="evidence" value="ECO:0007669"/>
    <property type="project" value="UniProtKB-UniRule"/>
</dbReference>
<dbReference type="GO" id="GO:0006015">
    <property type="term" value="P:5-phosphoribose 1-diphosphate biosynthetic process"/>
    <property type="evidence" value="ECO:0007669"/>
    <property type="project" value="UniProtKB-UniPathway"/>
</dbReference>
<dbReference type="GO" id="GO:0043094">
    <property type="term" value="P:metabolic compound salvage"/>
    <property type="evidence" value="ECO:0007669"/>
    <property type="project" value="InterPro"/>
</dbReference>
<dbReference type="GO" id="GO:0009117">
    <property type="term" value="P:nucleotide metabolic process"/>
    <property type="evidence" value="ECO:0007669"/>
    <property type="project" value="InterPro"/>
</dbReference>
<dbReference type="CDD" id="cd16009">
    <property type="entry name" value="PPM"/>
    <property type="match status" value="1"/>
</dbReference>
<dbReference type="FunFam" id="3.30.70.1250:FF:000001">
    <property type="entry name" value="Phosphopentomutase"/>
    <property type="match status" value="1"/>
</dbReference>
<dbReference type="Gene3D" id="3.40.720.10">
    <property type="entry name" value="Alkaline Phosphatase, subunit A"/>
    <property type="match status" value="1"/>
</dbReference>
<dbReference type="Gene3D" id="3.30.70.1250">
    <property type="entry name" value="Phosphopentomutase"/>
    <property type="match status" value="1"/>
</dbReference>
<dbReference type="HAMAP" id="MF_00740">
    <property type="entry name" value="Phosphopentomut"/>
    <property type="match status" value="1"/>
</dbReference>
<dbReference type="InterPro" id="IPR017850">
    <property type="entry name" value="Alkaline_phosphatase_core_sf"/>
</dbReference>
<dbReference type="InterPro" id="IPR010045">
    <property type="entry name" value="DeoB"/>
</dbReference>
<dbReference type="InterPro" id="IPR006124">
    <property type="entry name" value="Metalloenzyme"/>
</dbReference>
<dbReference type="InterPro" id="IPR024052">
    <property type="entry name" value="Phosphopentomutase_DeoB_cap_sf"/>
</dbReference>
<dbReference type="NCBIfam" id="TIGR01696">
    <property type="entry name" value="deoB"/>
    <property type="match status" value="1"/>
</dbReference>
<dbReference type="NCBIfam" id="NF003766">
    <property type="entry name" value="PRK05362.1"/>
    <property type="match status" value="1"/>
</dbReference>
<dbReference type="PANTHER" id="PTHR21110">
    <property type="entry name" value="PHOSPHOPENTOMUTASE"/>
    <property type="match status" value="1"/>
</dbReference>
<dbReference type="PANTHER" id="PTHR21110:SF0">
    <property type="entry name" value="PHOSPHOPENTOMUTASE"/>
    <property type="match status" value="1"/>
</dbReference>
<dbReference type="Pfam" id="PF01676">
    <property type="entry name" value="Metalloenzyme"/>
    <property type="match status" value="1"/>
</dbReference>
<dbReference type="PIRSF" id="PIRSF001491">
    <property type="entry name" value="Ppentomutase"/>
    <property type="match status" value="1"/>
</dbReference>
<dbReference type="SUPFAM" id="SSF53649">
    <property type="entry name" value="Alkaline phosphatase-like"/>
    <property type="match status" value="1"/>
</dbReference>
<dbReference type="SUPFAM" id="SSF143856">
    <property type="entry name" value="DeoB insert domain-like"/>
    <property type="match status" value="1"/>
</dbReference>
<proteinExistence type="inferred from homology"/>
<comment type="function">
    <text evidence="1">Isomerase that catalyzes the conversion of deoxy-ribose 1-phosphate (dRib-1-P) and ribose 1-phosphate (Rib-1-P) to deoxy-ribose 5-phosphate (dRib-5-P) and ribose 5-phosphate (Rib-5-P), respectively.</text>
</comment>
<comment type="catalytic activity">
    <reaction evidence="1">
        <text>2-deoxy-alpha-D-ribose 1-phosphate = 2-deoxy-D-ribose 5-phosphate</text>
        <dbReference type="Rhea" id="RHEA:27658"/>
        <dbReference type="ChEBI" id="CHEBI:57259"/>
        <dbReference type="ChEBI" id="CHEBI:62877"/>
        <dbReference type="EC" id="5.4.2.7"/>
    </reaction>
</comment>
<comment type="catalytic activity">
    <reaction evidence="1">
        <text>alpha-D-ribose 1-phosphate = D-ribose 5-phosphate</text>
        <dbReference type="Rhea" id="RHEA:18793"/>
        <dbReference type="ChEBI" id="CHEBI:57720"/>
        <dbReference type="ChEBI" id="CHEBI:78346"/>
        <dbReference type="EC" id="5.4.2.7"/>
    </reaction>
</comment>
<comment type="cofactor">
    <cofactor evidence="1">
        <name>Mn(2+)</name>
        <dbReference type="ChEBI" id="CHEBI:29035"/>
    </cofactor>
    <text evidence="1">Binds 2 manganese ions.</text>
</comment>
<comment type="pathway">
    <text evidence="1">Carbohydrate degradation; 2-deoxy-D-ribose 1-phosphate degradation; D-glyceraldehyde 3-phosphate and acetaldehyde from 2-deoxy-alpha-D-ribose 1-phosphate: step 1/2.</text>
</comment>
<comment type="subcellular location">
    <subcellularLocation>
        <location evidence="1">Cytoplasm</location>
    </subcellularLocation>
</comment>
<comment type="similarity">
    <text evidence="1">Belongs to the phosphopentomutase family.</text>
</comment>